<accession>B6DCV0</accession>
<sequence>MKYQILFGVVFLTLLSYCYSEIEDEFENFVDEEMVEADDPFSLARKDKENCIPKHHECTSDRHGCCRGSMFKYKCQCVKIVNAQKEETERCACITPGLHKAAEFVVQLFKKVIA</sequence>
<keyword id="KW-1015">Disulfide bond</keyword>
<keyword id="KW-0964">Secreted</keyword>
<keyword id="KW-0732">Signal</keyword>
<keyword id="KW-0800">Toxin</keyword>
<comment type="subcellular location">
    <subcellularLocation>
        <location evidence="1">Secreted</location>
    </subcellularLocation>
</comment>
<comment type="tissue specificity">
    <text>Expressed by the venom gland.</text>
</comment>
<comment type="similarity">
    <text evidence="3">Belongs to the neurotoxin 19 (CSTX) family. 04 (U1-Lctx) subfamily.</text>
</comment>
<protein>
    <recommendedName>
        <fullName>U5-lycotoxin-Ls1a</fullName>
    </recommendedName>
    <alternativeName>
        <fullName>Toxin-like structure LSTX-E1</fullName>
    </alternativeName>
</protein>
<feature type="signal peptide" evidence="2">
    <location>
        <begin position="1"/>
        <end position="20"/>
    </location>
</feature>
<feature type="propeptide" id="PRO_0000401691" evidence="1">
    <location>
        <begin position="21"/>
        <end position="45"/>
    </location>
</feature>
<feature type="chain" id="PRO_0000401692" description="U5-lycotoxin-Ls1a">
    <location>
        <begin position="46"/>
        <end position="114"/>
    </location>
</feature>
<feature type="disulfide bond" evidence="1">
    <location>
        <begin position="51"/>
        <end position="66"/>
    </location>
</feature>
<feature type="disulfide bond" evidence="1">
    <location>
        <begin position="65"/>
        <end position="93"/>
    </location>
</feature>
<feature type="disulfide bond" evidence="1">
    <location>
        <begin position="77"/>
        <end position="91"/>
    </location>
</feature>
<evidence type="ECO:0000250" key="1"/>
<evidence type="ECO:0000255" key="2"/>
<evidence type="ECO:0000305" key="3"/>
<proteinExistence type="evidence at transcript level"/>
<reference key="1">
    <citation type="journal article" date="2010" name="Zoology">
        <title>Transcriptome analysis of the venom glands of the Chinese wolf spider Lycosa singoriensis.</title>
        <authorList>
            <person name="Zhang Y."/>
            <person name="Chen J."/>
            <person name="Tang X."/>
            <person name="Wang F."/>
            <person name="Jiang L."/>
            <person name="Xiong X."/>
            <person name="Wang M."/>
            <person name="Rong M."/>
            <person name="Liu Z."/>
            <person name="Liang S."/>
        </authorList>
    </citation>
    <scope>NUCLEOTIDE SEQUENCE [LARGE SCALE MRNA]</scope>
    <source>
        <tissue>Venom gland</tissue>
    </source>
</reference>
<dbReference type="EMBL" id="EU926034">
    <property type="protein sequence ID" value="ACI41366.1"/>
    <property type="molecule type" value="mRNA"/>
</dbReference>
<dbReference type="EMBL" id="FM864038">
    <property type="protein sequence ID" value="CAS03635.1"/>
    <property type="molecule type" value="mRNA"/>
</dbReference>
<dbReference type="SMR" id="B6DCV0"/>
<dbReference type="ArachnoServer" id="AS000983">
    <property type="toxin name" value="U5-lycotoxin-Ls1a"/>
</dbReference>
<dbReference type="GO" id="GO:0005576">
    <property type="term" value="C:extracellular region"/>
    <property type="evidence" value="ECO:0007669"/>
    <property type="project" value="UniProtKB-SubCell"/>
</dbReference>
<dbReference type="GO" id="GO:0090729">
    <property type="term" value="F:toxin activity"/>
    <property type="evidence" value="ECO:0007669"/>
    <property type="project" value="UniProtKB-KW"/>
</dbReference>
<dbReference type="InterPro" id="IPR019553">
    <property type="entry name" value="Spider_toxin_CSTX_knottin"/>
</dbReference>
<dbReference type="InterPro" id="IPR011142">
    <property type="entry name" value="Spider_toxin_CSTX_Knottin_CS"/>
</dbReference>
<dbReference type="Pfam" id="PF10530">
    <property type="entry name" value="Toxin_35"/>
    <property type="match status" value="1"/>
</dbReference>
<dbReference type="PROSITE" id="PS60029">
    <property type="entry name" value="SPIDER_CSTX"/>
    <property type="match status" value="1"/>
</dbReference>
<name>TX501_LYCSI</name>
<organism>
    <name type="scientific">Lycosa singoriensis</name>
    <name type="common">Wolf spider</name>
    <name type="synonym">Aranea singoriensis</name>
    <dbReference type="NCBI Taxonomy" id="434756"/>
    <lineage>
        <taxon>Eukaryota</taxon>
        <taxon>Metazoa</taxon>
        <taxon>Ecdysozoa</taxon>
        <taxon>Arthropoda</taxon>
        <taxon>Chelicerata</taxon>
        <taxon>Arachnida</taxon>
        <taxon>Araneae</taxon>
        <taxon>Araneomorphae</taxon>
        <taxon>Entelegynae</taxon>
        <taxon>Lycosoidea</taxon>
        <taxon>Lycosidae</taxon>
        <taxon>Lycosa</taxon>
    </lineage>
</organism>